<accession>C0R074</accession>
<comment type="function">
    <text evidence="1">Allows the formation of correctly charged Gln-tRNA(Gln) through the transamidation of misacylated Glu-tRNA(Gln) in organisms which lack glutaminyl-tRNA synthetase. The reaction takes place in the presence of glutamine and ATP through an activated gamma-phospho-Glu-tRNA(Gln).</text>
</comment>
<comment type="catalytic activity">
    <reaction evidence="1">
        <text>L-glutamyl-tRNA(Gln) + L-glutamine + ATP + H2O = L-glutaminyl-tRNA(Gln) + L-glutamate + ADP + phosphate + H(+)</text>
        <dbReference type="Rhea" id="RHEA:17521"/>
        <dbReference type="Rhea" id="RHEA-COMP:9681"/>
        <dbReference type="Rhea" id="RHEA-COMP:9684"/>
        <dbReference type="ChEBI" id="CHEBI:15377"/>
        <dbReference type="ChEBI" id="CHEBI:15378"/>
        <dbReference type="ChEBI" id="CHEBI:29985"/>
        <dbReference type="ChEBI" id="CHEBI:30616"/>
        <dbReference type="ChEBI" id="CHEBI:43474"/>
        <dbReference type="ChEBI" id="CHEBI:58359"/>
        <dbReference type="ChEBI" id="CHEBI:78520"/>
        <dbReference type="ChEBI" id="CHEBI:78521"/>
        <dbReference type="ChEBI" id="CHEBI:456216"/>
        <dbReference type="EC" id="6.3.5.7"/>
    </reaction>
</comment>
<comment type="subunit">
    <text evidence="1">Heterotrimer of A, B and C subunits.</text>
</comment>
<comment type="similarity">
    <text evidence="1">Belongs to the amidase family. GatA subfamily.</text>
</comment>
<name>GATA_BRAHW</name>
<organism>
    <name type="scientific">Brachyspira hyodysenteriae (strain ATCC 49526 / WA1)</name>
    <dbReference type="NCBI Taxonomy" id="565034"/>
    <lineage>
        <taxon>Bacteria</taxon>
        <taxon>Pseudomonadati</taxon>
        <taxon>Spirochaetota</taxon>
        <taxon>Spirochaetia</taxon>
        <taxon>Brachyspirales</taxon>
        <taxon>Brachyspiraceae</taxon>
        <taxon>Brachyspira</taxon>
    </lineage>
</organism>
<reference key="1">
    <citation type="journal article" date="2009" name="PLoS ONE">
        <title>Genome sequence of the pathogenic intestinal spirochete Brachyspira hyodysenteriae reveals adaptations to its lifestyle in the porcine large intestine.</title>
        <authorList>
            <person name="Bellgard M.I."/>
            <person name="Wanchanthuek P."/>
            <person name="La T."/>
            <person name="Ryan K."/>
            <person name="Moolhuijzen P."/>
            <person name="Albertyn Z."/>
            <person name="Shaban B."/>
            <person name="Motro Y."/>
            <person name="Dunn D.S."/>
            <person name="Schibeci D."/>
            <person name="Hunter A."/>
            <person name="Barrero R."/>
            <person name="Phillips N.D."/>
            <person name="Hampson D.J."/>
        </authorList>
    </citation>
    <scope>NUCLEOTIDE SEQUENCE [LARGE SCALE GENOMIC DNA]</scope>
    <source>
        <strain>ATCC 49526 / WA1</strain>
    </source>
</reference>
<protein>
    <recommendedName>
        <fullName evidence="1">Glutamyl-tRNA(Gln) amidotransferase subunit A</fullName>
        <shortName evidence="1">Glu-ADT subunit A</shortName>
        <ecNumber evidence="1">6.3.5.7</ecNumber>
    </recommendedName>
</protein>
<proteinExistence type="inferred from homology"/>
<keyword id="KW-0067">ATP-binding</keyword>
<keyword id="KW-0436">Ligase</keyword>
<keyword id="KW-0547">Nucleotide-binding</keyword>
<keyword id="KW-0648">Protein biosynthesis</keyword>
<sequence>MELNELTIIQIREKLKNKEIDAPTLVDSIIKNIEEDNKRDDKIYAYLEIFKEEALEQAKKAQERINNGEDLPLLGVPLAIKDNLCYKDHLMTASSKMLEGYKAPYTAPTVQRLIDNGAIIIGRTNMDEFAMGGTTETSNYGVTRNPKNRAHVPGGSSGGSAAAVAANFAFGALGSDTGGSIRQPASFCGIVGVKPTYGRVPRLGCIAMASSLDQVGPLTKDVKDAALMTKIIAGFDPKESTTLNIPVPDYVAALDGNIKGMKIGLAKEYYDTDLIAADVKENVMDAIGKLKDQGAEIVDISLPNAKYGSRVYTAVMDVEVASNMGRYDGIRYGYHPKGDFNLDEYYYTSRSVGLAFETRARILFGTLMTGKRFFYSHYQHALKVRKLMQMDFDNAFKNVDVIVSPTSPVTAGLLGTRDQTDSALSFLADSYVSNINLVGLPAMSVPCGVDKNNMPIGIQFITKQFNEVDMFRMAYAHELANK</sequence>
<feature type="chain" id="PRO_1000203025" description="Glutamyl-tRNA(Gln) amidotransferase subunit A">
    <location>
        <begin position="1"/>
        <end position="482"/>
    </location>
</feature>
<feature type="active site" description="Charge relay system" evidence="1">
    <location>
        <position position="81"/>
    </location>
</feature>
<feature type="active site" description="Charge relay system" evidence="1">
    <location>
        <position position="156"/>
    </location>
</feature>
<feature type="active site" description="Acyl-ester intermediate" evidence="1">
    <location>
        <position position="180"/>
    </location>
</feature>
<evidence type="ECO:0000255" key="1">
    <source>
        <dbReference type="HAMAP-Rule" id="MF_00120"/>
    </source>
</evidence>
<dbReference type="EC" id="6.3.5.7" evidence="1"/>
<dbReference type="EMBL" id="CP001357">
    <property type="protein sequence ID" value="ACN83512.1"/>
    <property type="molecule type" value="Genomic_DNA"/>
</dbReference>
<dbReference type="RefSeq" id="WP_012670561.1">
    <property type="nucleotide sequence ID" value="NC_012225.1"/>
</dbReference>
<dbReference type="SMR" id="C0R074"/>
<dbReference type="STRING" id="565034.BHWA1_01029"/>
<dbReference type="GeneID" id="63962136"/>
<dbReference type="KEGG" id="bhy:BHWA1_01029"/>
<dbReference type="eggNOG" id="COG0154">
    <property type="taxonomic scope" value="Bacteria"/>
</dbReference>
<dbReference type="HOGENOM" id="CLU_009600_0_3_12"/>
<dbReference type="Proteomes" id="UP000001803">
    <property type="component" value="Chromosome"/>
</dbReference>
<dbReference type="GO" id="GO:0030956">
    <property type="term" value="C:glutamyl-tRNA(Gln) amidotransferase complex"/>
    <property type="evidence" value="ECO:0007669"/>
    <property type="project" value="InterPro"/>
</dbReference>
<dbReference type="GO" id="GO:0005524">
    <property type="term" value="F:ATP binding"/>
    <property type="evidence" value="ECO:0007669"/>
    <property type="project" value="UniProtKB-KW"/>
</dbReference>
<dbReference type="GO" id="GO:0050567">
    <property type="term" value="F:glutaminyl-tRNA synthase (glutamine-hydrolyzing) activity"/>
    <property type="evidence" value="ECO:0007669"/>
    <property type="project" value="UniProtKB-UniRule"/>
</dbReference>
<dbReference type="GO" id="GO:0006412">
    <property type="term" value="P:translation"/>
    <property type="evidence" value="ECO:0007669"/>
    <property type="project" value="UniProtKB-UniRule"/>
</dbReference>
<dbReference type="Gene3D" id="3.90.1300.10">
    <property type="entry name" value="Amidase signature (AS) domain"/>
    <property type="match status" value="1"/>
</dbReference>
<dbReference type="HAMAP" id="MF_00120">
    <property type="entry name" value="GatA"/>
    <property type="match status" value="1"/>
</dbReference>
<dbReference type="InterPro" id="IPR000120">
    <property type="entry name" value="Amidase"/>
</dbReference>
<dbReference type="InterPro" id="IPR020556">
    <property type="entry name" value="Amidase_CS"/>
</dbReference>
<dbReference type="InterPro" id="IPR023631">
    <property type="entry name" value="Amidase_dom"/>
</dbReference>
<dbReference type="InterPro" id="IPR036928">
    <property type="entry name" value="AS_sf"/>
</dbReference>
<dbReference type="InterPro" id="IPR004412">
    <property type="entry name" value="GatA"/>
</dbReference>
<dbReference type="NCBIfam" id="TIGR00132">
    <property type="entry name" value="gatA"/>
    <property type="match status" value="1"/>
</dbReference>
<dbReference type="PANTHER" id="PTHR11895:SF151">
    <property type="entry name" value="GLUTAMYL-TRNA(GLN) AMIDOTRANSFERASE SUBUNIT A"/>
    <property type="match status" value="1"/>
</dbReference>
<dbReference type="PANTHER" id="PTHR11895">
    <property type="entry name" value="TRANSAMIDASE"/>
    <property type="match status" value="1"/>
</dbReference>
<dbReference type="Pfam" id="PF01425">
    <property type="entry name" value="Amidase"/>
    <property type="match status" value="1"/>
</dbReference>
<dbReference type="SUPFAM" id="SSF75304">
    <property type="entry name" value="Amidase signature (AS) enzymes"/>
    <property type="match status" value="1"/>
</dbReference>
<dbReference type="PROSITE" id="PS00571">
    <property type="entry name" value="AMIDASES"/>
    <property type="match status" value="1"/>
</dbReference>
<gene>
    <name evidence="1" type="primary">gatA</name>
    <name type="ordered locus">BHWA1_01029</name>
</gene>